<dbReference type="EMBL" id="CU928158">
    <property type="protein sequence ID" value="CAQ90761.1"/>
    <property type="molecule type" value="Genomic_DNA"/>
</dbReference>
<dbReference type="RefSeq" id="WP_001029684.1">
    <property type="nucleotide sequence ID" value="NC_011740.1"/>
</dbReference>
<dbReference type="SMR" id="B7LRR4"/>
<dbReference type="GeneID" id="93778690"/>
<dbReference type="KEGG" id="efe:EFER_3281"/>
<dbReference type="HOGENOM" id="CLU_072439_5_0_6"/>
<dbReference type="OrthoDB" id="9806415at2"/>
<dbReference type="Proteomes" id="UP000000745">
    <property type="component" value="Chromosome"/>
</dbReference>
<dbReference type="GO" id="GO:1990904">
    <property type="term" value="C:ribonucleoprotein complex"/>
    <property type="evidence" value="ECO:0007669"/>
    <property type="project" value="UniProtKB-KW"/>
</dbReference>
<dbReference type="GO" id="GO:0005840">
    <property type="term" value="C:ribosome"/>
    <property type="evidence" value="ECO:0007669"/>
    <property type="project" value="UniProtKB-KW"/>
</dbReference>
<dbReference type="GO" id="GO:0019843">
    <property type="term" value="F:rRNA binding"/>
    <property type="evidence" value="ECO:0007669"/>
    <property type="project" value="UniProtKB-UniRule"/>
</dbReference>
<dbReference type="GO" id="GO:0003735">
    <property type="term" value="F:structural constituent of ribosome"/>
    <property type="evidence" value="ECO:0007669"/>
    <property type="project" value="InterPro"/>
</dbReference>
<dbReference type="GO" id="GO:0006412">
    <property type="term" value="P:translation"/>
    <property type="evidence" value="ECO:0007669"/>
    <property type="project" value="UniProtKB-UniRule"/>
</dbReference>
<dbReference type="FunFam" id="3.30.420.80:FF:000001">
    <property type="entry name" value="30S ribosomal protein S11"/>
    <property type="match status" value="1"/>
</dbReference>
<dbReference type="Gene3D" id="3.30.420.80">
    <property type="entry name" value="Ribosomal protein S11"/>
    <property type="match status" value="1"/>
</dbReference>
<dbReference type="HAMAP" id="MF_01310">
    <property type="entry name" value="Ribosomal_uS11"/>
    <property type="match status" value="1"/>
</dbReference>
<dbReference type="InterPro" id="IPR001971">
    <property type="entry name" value="Ribosomal_uS11"/>
</dbReference>
<dbReference type="InterPro" id="IPR019981">
    <property type="entry name" value="Ribosomal_uS11_bac-type"/>
</dbReference>
<dbReference type="InterPro" id="IPR018102">
    <property type="entry name" value="Ribosomal_uS11_CS"/>
</dbReference>
<dbReference type="InterPro" id="IPR036967">
    <property type="entry name" value="Ribosomal_uS11_sf"/>
</dbReference>
<dbReference type="NCBIfam" id="NF003698">
    <property type="entry name" value="PRK05309.1"/>
    <property type="match status" value="1"/>
</dbReference>
<dbReference type="NCBIfam" id="TIGR03632">
    <property type="entry name" value="uS11_bact"/>
    <property type="match status" value="1"/>
</dbReference>
<dbReference type="PANTHER" id="PTHR11759">
    <property type="entry name" value="40S RIBOSOMAL PROTEIN S14/30S RIBOSOMAL PROTEIN S11"/>
    <property type="match status" value="1"/>
</dbReference>
<dbReference type="Pfam" id="PF00411">
    <property type="entry name" value="Ribosomal_S11"/>
    <property type="match status" value="1"/>
</dbReference>
<dbReference type="PIRSF" id="PIRSF002131">
    <property type="entry name" value="Ribosomal_S11"/>
    <property type="match status" value="1"/>
</dbReference>
<dbReference type="SUPFAM" id="SSF53137">
    <property type="entry name" value="Translational machinery components"/>
    <property type="match status" value="1"/>
</dbReference>
<dbReference type="PROSITE" id="PS00054">
    <property type="entry name" value="RIBOSOMAL_S11"/>
    <property type="match status" value="1"/>
</dbReference>
<reference key="1">
    <citation type="journal article" date="2009" name="PLoS Genet.">
        <title>Organised genome dynamics in the Escherichia coli species results in highly diverse adaptive paths.</title>
        <authorList>
            <person name="Touchon M."/>
            <person name="Hoede C."/>
            <person name="Tenaillon O."/>
            <person name="Barbe V."/>
            <person name="Baeriswyl S."/>
            <person name="Bidet P."/>
            <person name="Bingen E."/>
            <person name="Bonacorsi S."/>
            <person name="Bouchier C."/>
            <person name="Bouvet O."/>
            <person name="Calteau A."/>
            <person name="Chiapello H."/>
            <person name="Clermont O."/>
            <person name="Cruveiller S."/>
            <person name="Danchin A."/>
            <person name="Diard M."/>
            <person name="Dossat C."/>
            <person name="Karoui M.E."/>
            <person name="Frapy E."/>
            <person name="Garry L."/>
            <person name="Ghigo J.M."/>
            <person name="Gilles A.M."/>
            <person name="Johnson J."/>
            <person name="Le Bouguenec C."/>
            <person name="Lescat M."/>
            <person name="Mangenot S."/>
            <person name="Martinez-Jehanne V."/>
            <person name="Matic I."/>
            <person name="Nassif X."/>
            <person name="Oztas S."/>
            <person name="Petit M.A."/>
            <person name="Pichon C."/>
            <person name="Rouy Z."/>
            <person name="Ruf C.S."/>
            <person name="Schneider D."/>
            <person name="Tourret J."/>
            <person name="Vacherie B."/>
            <person name="Vallenet D."/>
            <person name="Medigue C."/>
            <person name="Rocha E.P.C."/>
            <person name="Denamur E."/>
        </authorList>
    </citation>
    <scope>NUCLEOTIDE SEQUENCE [LARGE SCALE GENOMIC DNA]</scope>
    <source>
        <strain>ATCC 35469 / DSM 13698 / BCRC 15582 / CCUG 18766 / IAM 14443 / JCM 21226 / LMG 7866 / NBRC 102419 / NCTC 12128 / CDC 0568-73</strain>
    </source>
</reference>
<proteinExistence type="inferred from homology"/>
<protein>
    <recommendedName>
        <fullName evidence="1">Small ribosomal subunit protein uS11</fullName>
    </recommendedName>
    <alternativeName>
        <fullName evidence="2">30S ribosomal protein S11</fullName>
    </alternativeName>
</protein>
<gene>
    <name evidence="1" type="primary">rpsK</name>
    <name type="ordered locus">EFER_3281</name>
</gene>
<comment type="function">
    <text evidence="1">Located on the platform of the 30S subunit, it bridges several disparate RNA helices of the 16S rRNA. Forms part of the Shine-Dalgarno cleft in the 70S ribosome.</text>
</comment>
<comment type="subunit">
    <text evidence="1">Part of the 30S ribosomal subunit. Interacts with proteins S7 and S18. Binds to IF-3.</text>
</comment>
<comment type="similarity">
    <text evidence="1">Belongs to the universal ribosomal protein uS11 family.</text>
</comment>
<name>RS11_ESCF3</name>
<sequence>MAKAPIRARKRVRKQVSDGVAHIHASFNNTIVTITDRQGNALGWATAGGSGFRGSRKSTPFAAQVAAERCADAVKEYGIKNLEVMVKGPGPGRESTIRALNAAGFRITNITDVTPIPHNGCRPPKKRRV</sequence>
<evidence type="ECO:0000255" key="1">
    <source>
        <dbReference type="HAMAP-Rule" id="MF_01310"/>
    </source>
</evidence>
<evidence type="ECO:0000305" key="2"/>
<organism>
    <name type="scientific">Escherichia fergusonii (strain ATCC 35469 / DSM 13698 / CCUG 18766 / IAM 14443 / JCM 21226 / LMG 7866 / NBRC 102419 / NCTC 12128 / CDC 0568-73)</name>
    <dbReference type="NCBI Taxonomy" id="585054"/>
    <lineage>
        <taxon>Bacteria</taxon>
        <taxon>Pseudomonadati</taxon>
        <taxon>Pseudomonadota</taxon>
        <taxon>Gammaproteobacteria</taxon>
        <taxon>Enterobacterales</taxon>
        <taxon>Enterobacteriaceae</taxon>
        <taxon>Escherichia</taxon>
    </lineage>
</organism>
<accession>B7LRR4</accession>
<feature type="chain" id="PRO_1000141096" description="Small ribosomal subunit protein uS11">
    <location>
        <begin position="1"/>
        <end position="129"/>
    </location>
</feature>
<keyword id="KW-0687">Ribonucleoprotein</keyword>
<keyword id="KW-0689">Ribosomal protein</keyword>
<keyword id="KW-0694">RNA-binding</keyword>
<keyword id="KW-0699">rRNA-binding</keyword>